<evidence type="ECO:0000255" key="1">
    <source>
        <dbReference type="HAMAP-Rule" id="MF_01077"/>
    </source>
</evidence>
<keyword id="KW-0963">Cytoplasm</keyword>
<keyword id="KW-0690">Ribosome biogenesis</keyword>
<reference key="1">
    <citation type="journal article" date="2002" name="Proc. Natl. Acad. Sci. U.S.A.">
        <title>Genome sequence of a serotype M3 strain of group A Streptococcus: phage-encoded toxins, the high-virulence phenotype, and clone emergence.</title>
        <authorList>
            <person name="Beres S.B."/>
            <person name="Sylva G.L."/>
            <person name="Barbian K.D."/>
            <person name="Lei B."/>
            <person name="Hoff J.S."/>
            <person name="Mammarella N.D."/>
            <person name="Liu M.-Y."/>
            <person name="Smoot J.C."/>
            <person name="Porcella S.F."/>
            <person name="Parkins L.D."/>
            <person name="Campbell D.S."/>
            <person name="Smith T.M."/>
            <person name="McCormick J.K."/>
            <person name="Leung D.Y.M."/>
            <person name="Schlievert P.M."/>
            <person name="Musser J.M."/>
        </authorList>
    </citation>
    <scope>NUCLEOTIDE SEQUENCE [LARGE SCALE GENOMIC DNA]</scope>
    <source>
        <strain>ATCC BAA-595 / MGAS315</strain>
    </source>
</reference>
<organism>
    <name type="scientific">Streptococcus pyogenes serotype M3 (strain ATCC BAA-595 / MGAS315)</name>
    <dbReference type="NCBI Taxonomy" id="198466"/>
    <lineage>
        <taxon>Bacteria</taxon>
        <taxon>Bacillati</taxon>
        <taxon>Bacillota</taxon>
        <taxon>Bacilli</taxon>
        <taxon>Lactobacillales</taxon>
        <taxon>Streptococcaceae</taxon>
        <taxon>Streptococcus</taxon>
    </lineage>
</organism>
<accession>P0DF06</accession>
<accession>Q879I9</accession>
<accession>Q8K642</accession>
<name>RIMP_STRP3</name>
<proteinExistence type="inferred from homology"/>
<comment type="function">
    <text evidence="1">Required for maturation of 30S ribosomal subunits.</text>
</comment>
<comment type="subcellular location">
    <subcellularLocation>
        <location evidence="1">Cytoplasm</location>
    </subcellularLocation>
</comment>
<comment type="similarity">
    <text evidence="1">Belongs to the RimP family.</text>
</comment>
<sequence>MDSQGPIILEKSIKIEEVIKIANTSIIDIVTKTVTPEIKAPYELVDVEYDKMGSDYILSILVDKEDGITVEDTSDLTNIISPLLDTIDPDPFPNQYMLEVSSPGLERPLKTADSLKAAVGSYINVSLYQAIDKVKVFQGDLLAFDGETLTIDYLDKTRHKIVNIPYQAVAKVRMAVKL</sequence>
<feature type="chain" id="PRO_0000181937" description="Ribosome maturation factor RimP">
    <location>
        <begin position="1"/>
        <end position="178"/>
    </location>
</feature>
<dbReference type="EMBL" id="AE014074">
    <property type="protein sequence ID" value="AAM80106.1"/>
    <property type="molecule type" value="Genomic_DNA"/>
</dbReference>
<dbReference type="RefSeq" id="WP_011054929.1">
    <property type="nucleotide sequence ID" value="NC_004070.1"/>
</dbReference>
<dbReference type="SMR" id="P0DF06"/>
<dbReference type="KEGG" id="spg:SpyM3_1499"/>
<dbReference type="HOGENOM" id="CLU_070525_2_0_9"/>
<dbReference type="Proteomes" id="UP000000564">
    <property type="component" value="Chromosome"/>
</dbReference>
<dbReference type="GO" id="GO:0005829">
    <property type="term" value="C:cytosol"/>
    <property type="evidence" value="ECO:0007669"/>
    <property type="project" value="TreeGrafter"/>
</dbReference>
<dbReference type="GO" id="GO:0000028">
    <property type="term" value="P:ribosomal small subunit assembly"/>
    <property type="evidence" value="ECO:0007669"/>
    <property type="project" value="TreeGrafter"/>
</dbReference>
<dbReference type="GO" id="GO:0006412">
    <property type="term" value="P:translation"/>
    <property type="evidence" value="ECO:0007669"/>
    <property type="project" value="TreeGrafter"/>
</dbReference>
<dbReference type="CDD" id="cd01734">
    <property type="entry name" value="YlxS_C"/>
    <property type="match status" value="1"/>
</dbReference>
<dbReference type="Gene3D" id="2.30.30.180">
    <property type="entry name" value="Ribosome maturation factor RimP, C-terminal domain"/>
    <property type="match status" value="1"/>
</dbReference>
<dbReference type="Gene3D" id="3.30.300.70">
    <property type="entry name" value="RimP-like superfamily, N-terminal"/>
    <property type="match status" value="1"/>
</dbReference>
<dbReference type="HAMAP" id="MF_01077">
    <property type="entry name" value="RimP"/>
    <property type="match status" value="1"/>
</dbReference>
<dbReference type="InterPro" id="IPR003728">
    <property type="entry name" value="Ribosome_maturation_RimP"/>
</dbReference>
<dbReference type="InterPro" id="IPR028998">
    <property type="entry name" value="RimP_C"/>
</dbReference>
<dbReference type="InterPro" id="IPR036847">
    <property type="entry name" value="RimP_C_sf"/>
</dbReference>
<dbReference type="InterPro" id="IPR028989">
    <property type="entry name" value="RimP_N"/>
</dbReference>
<dbReference type="InterPro" id="IPR035956">
    <property type="entry name" value="RimP_N_sf"/>
</dbReference>
<dbReference type="NCBIfam" id="NF000928">
    <property type="entry name" value="PRK00092.1-2"/>
    <property type="match status" value="1"/>
</dbReference>
<dbReference type="PANTHER" id="PTHR33867">
    <property type="entry name" value="RIBOSOME MATURATION FACTOR RIMP"/>
    <property type="match status" value="1"/>
</dbReference>
<dbReference type="PANTHER" id="PTHR33867:SF1">
    <property type="entry name" value="RIBOSOME MATURATION FACTOR RIMP"/>
    <property type="match status" value="1"/>
</dbReference>
<dbReference type="Pfam" id="PF17384">
    <property type="entry name" value="DUF150_C"/>
    <property type="match status" value="1"/>
</dbReference>
<dbReference type="Pfam" id="PF02576">
    <property type="entry name" value="RimP_N"/>
    <property type="match status" value="1"/>
</dbReference>
<dbReference type="SUPFAM" id="SSF74942">
    <property type="entry name" value="YhbC-like, C-terminal domain"/>
    <property type="match status" value="1"/>
</dbReference>
<dbReference type="SUPFAM" id="SSF75420">
    <property type="entry name" value="YhbC-like, N-terminal domain"/>
    <property type="match status" value="1"/>
</dbReference>
<protein>
    <recommendedName>
        <fullName evidence="1">Ribosome maturation factor RimP</fullName>
    </recommendedName>
</protein>
<gene>
    <name evidence="1" type="primary">rimP</name>
    <name type="ordered locus">SpyM3_1499</name>
</gene>